<keyword id="KW-0067">ATP-binding</keyword>
<keyword id="KW-0238">DNA-binding</keyword>
<keyword id="KW-0547">Nucleotide-binding</keyword>
<keyword id="KW-0597">Phosphoprotein</keyword>
<keyword id="KW-1185">Reference proteome</keyword>
<keyword id="KW-0804">Transcription</keyword>
<keyword id="KW-0805">Transcription regulation</keyword>
<name>NORR_ECO57</name>
<proteinExistence type="inferred from homology"/>
<accession>Q8X854</accession>
<feature type="chain" id="PRO_0000081155" description="Anaerobic nitric oxide reductase transcription regulator NorR">
    <location>
        <begin position="1"/>
        <end position="504"/>
    </location>
</feature>
<feature type="domain" description="Sigma-54 factor interaction" evidence="1">
    <location>
        <begin position="187"/>
        <end position="416"/>
    </location>
</feature>
<feature type="DNA-binding region" description="H-T-H motif" evidence="1">
    <location>
        <begin position="479"/>
        <end position="498"/>
    </location>
</feature>
<feature type="binding site" evidence="1">
    <location>
        <begin position="215"/>
        <end position="222"/>
    </location>
    <ligand>
        <name>ATP</name>
        <dbReference type="ChEBI" id="CHEBI:30616"/>
    </ligand>
</feature>
<feature type="binding site" evidence="1">
    <location>
        <begin position="278"/>
        <end position="287"/>
    </location>
    <ligand>
        <name>ATP</name>
        <dbReference type="ChEBI" id="CHEBI:30616"/>
    </ligand>
</feature>
<feature type="modified residue" description="4-aspartylphosphate" evidence="1">
    <location>
        <position position="57"/>
    </location>
</feature>
<gene>
    <name evidence="1" type="primary">norR</name>
    <name type="ordered locus">Z4017</name>
    <name type="ordered locus">ECs3565</name>
</gene>
<protein>
    <recommendedName>
        <fullName evidence="1">Anaerobic nitric oxide reductase transcription regulator NorR</fullName>
    </recommendedName>
</protein>
<dbReference type="EMBL" id="AE005174">
    <property type="protein sequence ID" value="AAG57816.1"/>
    <property type="status" value="ALT_INIT"/>
    <property type="molecule type" value="Genomic_DNA"/>
</dbReference>
<dbReference type="EMBL" id="BA000007">
    <property type="protein sequence ID" value="BAB36988.1"/>
    <property type="status" value="ALT_INIT"/>
    <property type="molecule type" value="Genomic_DNA"/>
</dbReference>
<dbReference type="PIR" id="D85919">
    <property type="entry name" value="D85919"/>
</dbReference>
<dbReference type="PIR" id="E91074">
    <property type="entry name" value="E91074"/>
</dbReference>
<dbReference type="RefSeq" id="NP_311592.2">
    <property type="nucleotide sequence ID" value="NC_002695.1"/>
</dbReference>
<dbReference type="RefSeq" id="WP_000010739.1">
    <property type="nucleotide sequence ID" value="NZ_VOAI01000003.1"/>
</dbReference>
<dbReference type="SMR" id="Q8X854"/>
<dbReference type="STRING" id="155864.Z4017"/>
<dbReference type="GeneID" id="914713"/>
<dbReference type="KEGG" id="ece:Z4017"/>
<dbReference type="KEGG" id="ecs:ECs_3565"/>
<dbReference type="PATRIC" id="fig|386585.9.peg.3725"/>
<dbReference type="eggNOG" id="COG3604">
    <property type="taxonomic scope" value="Bacteria"/>
</dbReference>
<dbReference type="HOGENOM" id="CLU_000445_125_0_6"/>
<dbReference type="OMA" id="LRYEAHQ"/>
<dbReference type="UniPathway" id="UPA00638"/>
<dbReference type="Proteomes" id="UP000000558">
    <property type="component" value="Chromosome"/>
</dbReference>
<dbReference type="Proteomes" id="UP000002519">
    <property type="component" value="Chromosome"/>
</dbReference>
<dbReference type="GO" id="GO:0005524">
    <property type="term" value="F:ATP binding"/>
    <property type="evidence" value="ECO:0007669"/>
    <property type="project" value="UniProtKB-UniRule"/>
</dbReference>
<dbReference type="GO" id="GO:0016887">
    <property type="term" value="F:ATP hydrolysis activity"/>
    <property type="evidence" value="ECO:0007669"/>
    <property type="project" value="InterPro"/>
</dbReference>
<dbReference type="GO" id="GO:0003677">
    <property type="term" value="F:DNA binding"/>
    <property type="evidence" value="ECO:0007669"/>
    <property type="project" value="UniProtKB-KW"/>
</dbReference>
<dbReference type="GO" id="GO:0003700">
    <property type="term" value="F:DNA-binding transcription factor activity"/>
    <property type="evidence" value="ECO:0007669"/>
    <property type="project" value="UniProtKB-UniRule"/>
</dbReference>
<dbReference type="GO" id="GO:0000160">
    <property type="term" value="P:phosphorelay signal transduction system"/>
    <property type="evidence" value="ECO:0007669"/>
    <property type="project" value="UniProtKB-UniRule"/>
</dbReference>
<dbReference type="CDD" id="cd00009">
    <property type="entry name" value="AAA"/>
    <property type="match status" value="1"/>
</dbReference>
<dbReference type="FunFam" id="1.10.10.60:FF:000188">
    <property type="entry name" value="Anaerobic nitric oxide reductase transcription regulator NorR"/>
    <property type="match status" value="1"/>
</dbReference>
<dbReference type="FunFam" id="1.10.8.60:FF:000045">
    <property type="entry name" value="Anaerobic nitric oxide reductase transcription regulator NorR"/>
    <property type="match status" value="1"/>
</dbReference>
<dbReference type="FunFam" id="3.30.450.40:FF:000021">
    <property type="entry name" value="Anaerobic nitric oxide reductase transcription regulator NorR"/>
    <property type="match status" value="1"/>
</dbReference>
<dbReference type="FunFam" id="3.40.50.300:FF:000006">
    <property type="entry name" value="DNA-binding transcriptional regulator NtrC"/>
    <property type="match status" value="1"/>
</dbReference>
<dbReference type="Gene3D" id="1.10.8.60">
    <property type="match status" value="1"/>
</dbReference>
<dbReference type="Gene3D" id="3.30.450.40">
    <property type="match status" value="1"/>
</dbReference>
<dbReference type="Gene3D" id="1.10.10.60">
    <property type="entry name" value="Homeodomain-like"/>
    <property type="match status" value="1"/>
</dbReference>
<dbReference type="Gene3D" id="3.40.50.300">
    <property type="entry name" value="P-loop containing nucleotide triphosphate hydrolases"/>
    <property type="match status" value="1"/>
</dbReference>
<dbReference type="HAMAP" id="MF_01314">
    <property type="entry name" value="NorR"/>
    <property type="match status" value="1"/>
</dbReference>
<dbReference type="InterPro" id="IPR003593">
    <property type="entry name" value="AAA+_ATPase"/>
</dbReference>
<dbReference type="InterPro" id="IPR003018">
    <property type="entry name" value="GAF"/>
</dbReference>
<dbReference type="InterPro" id="IPR029016">
    <property type="entry name" value="GAF-like_dom_sf"/>
</dbReference>
<dbReference type="InterPro" id="IPR009057">
    <property type="entry name" value="Homeodomain-like_sf"/>
</dbReference>
<dbReference type="InterPro" id="IPR023944">
    <property type="entry name" value="NorR"/>
</dbReference>
<dbReference type="InterPro" id="IPR027417">
    <property type="entry name" value="P-loop_NTPase"/>
</dbReference>
<dbReference type="InterPro" id="IPR002078">
    <property type="entry name" value="Sigma_54_int"/>
</dbReference>
<dbReference type="InterPro" id="IPR025662">
    <property type="entry name" value="Sigma_54_int_dom_ATP-bd_1"/>
</dbReference>
<dbReference type="InterPro" id="IPR025943">
    <property type="entry name" value="Sigma_54_int_dom_ATP-bd_2"/>
</dbReference>
<dbReference type="InterPro" id="IPR025944">
    <property type="entry name" value="Sigma_54_int_dom_CS"/>
</dbReference>
<dbReference type="NCBIfam" id="NF003451">
    <property type="entry name" value="PRK05022.1"/>
    <property type="match status" value="1"/>
</dbReference>
<dbReference type="PANTHER" id="PTHR32071:SF35">
    <property type="entry name" value="ANAEROBIC NITRIC OXIDE REDUCTASE TRANSCRIPTION REGULATOR NORR"/>
    <property type="match status" value="1"/>
</dbReference>
<dbReference type="PANTHER" id="PTHR32071">
    <property type="entry name" value="TRANSCRIPTIONAL REGULATORY PROTEIN"/>
    <property type="match status" value="1"/>
</dbReference>
<dbReference type="Pfam" id="PF01590">
    <property type="entry name" value="GAF"/>
    <property type="match status" value="1"/>
</dbReference>
<dbReference type="Pfam" id="PF00158">
    <property type="entry name" value="Sigma54_activat"/>
    <property type="match status" value="1"/>
</dbReference>
<dbReference type="SMART" id="SM00382">
    <property type="entry name" value="AAA"/>
    <property type="match status" value="1"/>
</dbReference>
<dbReference type="SMART" id="SM00065">
    <property type="entry name" value="GAF"/>
    <property type="match status" value="1"/>
</dbReference>
<dbReference type="SUPFAM" id="SSF55781">
    <property type="entry name" value="GAF domain-like"/>
    <property type="match status" value="1"/>
</dbReference>
<dbReference type="SUPFAM" id="SSF46689">
    <property type="entry name" value="Homeodomain-like"/>
    <property type="match status" value="1"/>
</dbReference>
<dbReference type="SUPFAM" id="SSF52540">
    <property type="entry name" value="P-loop containing nucleoside triphosphate hydrolases"/>
    <property type="match status" value="1"/>
</dbReference>
<dbReference type="PROSITE" id="PS00675">
    <property type="entry name" value="SIGMA54_INTERACT_1"/>
    <property type="match status" value="1"/>
</dbReference>
<dbReference type="PROSITE" id="PS00676">
    <property type="entry name" value="SIGMA54_INTERACT_2"/>
    <property type="match status" value="1"/>
</dbReference>
<dbReference type="PROSITE" id="PS00688">
    <property type="entry name" value="SIGMA54_INTERACT_3"/>
    <property type="match status" value="1"/>
</dbReference>
<dbReference type="PROSITE" id="PS50045">
    <property type="entry name" value="SIGMA54_INTERACT_4"/>
    <property type="match status" value="1"/>
</dbReference>
<reference key="1">
    <citation type="journal article" date="2001" name="Nature">
        <title>Genome sequence of enterohaemorrhagic Escherichia coli O157:H7.</title>
        <authorList>
            <person name="Perna N.T."/>
            <person name="Plunkett G. III"/>
            <person name="Burland V."/>
            <person name="Mau B."/>
            <person name="Glasner J.D."/>
            <person name="Rose D.J."/>
            <person name="Mayhew G.F."/>
            <person name="Evans P.S."/>
            <person name="Gregor J."/>
            <person name="Kirkpatrick H.A."/>
            <person name="Posfai G."/>
            <person name="Hackett J."/>
            <person name="Klink S."/>
            <person name="Boutin A."/>
            <person name="Shao Y."/>
            <person name="Miller L."/>
            <person name="Grotbeck E.J."/>
            <person name="Davis N.W."/>
            <person name="Lim A."/>
            <person name="Dimalanta E.T."/>
            <person name="Potamousis K."/>
            <person name="Apodaca J."/>
            <person name="Anantharaman T.S."/>
            <person name="Lin J."/>
            <person name="Yen G."/>
            <person name="Schwartz D.C."/>
            <person name="Welch R.A."/>
            <person name="Blattner F.R."/>
        </authorList>
    </citation>
    <scope>NUCLEOTIDE SEQUENCE [LARGE SCALE GENOMIC DNA]</scope>
    <source>
        <strain>O157:H7 / EDL933 / ATCC 700927 / EHEC</strain>
    </source>
</reference>
<reference key="2">
    <citation type="journal article" date="2001" name="DNA Res.">
        <title>Complete genome sequence of enterohemorrhagic Escherichia coli O157:H7 and genomic comparison with a laboratory strain K-12.</title>
        <authorList>
            <person name="Hayashi T."/>
            <person name="Makino K."/>
            <person name="Ohnishi M."/>
            <person name="Kurokawa K."/>
            <person name="Ishii K."/>
            <person name="Yokoyama K."/>
            <person name="Han C.-G."/>
            <person name="Ohtsubo E."/>
            <person name="Nakayama K."/>
            <person name="Murata T."/>
            <person name="Tanaka M."/>
            <person name="Tobe T."/>
            <person name="Iida T."/>
            <person name="Takami H."/>
            <person name="Honda T."/>
            <person name="Sasakawa C."/>
            <person name="Ogasawara N."/>
            <person name="Yasunaga T."/>
            <person name="Kuhara S."/>
            <person name="Shiba T."/>
            <person name="Hattori M."/>
            <person name="Shinagawa H."/>
        </authorList>
    </citation>
    <scope>NUCLEOTIDE SEQUENCE [LARGE SCALE GENOMIC DNA]</scope>
    <source>
        <strain>O157:H7 / Sakai / RIMD 0509952 / EHEC</strain>
    </source>
</reference>
<evidence type="ECO:0000255" key="1">
    <source>
        <dbReference type="HAMAP-Rule" id="MF_01314"/>
    </source>
</evidence>
<evidence type="ECO:0000305" key="2"/>
<organism>
    <name type="scientific">Escherichia coli O157:H7</name>
    <dbReference type="NCBI Taxonomy" id="83334"/>
    <lineage>
        <taxon>Bacteria</taxon>
        <taxon>Pseudomonadati</taxon>
        <taxon>Pseudomonadota</taxon>
        <taxon>Gammaproteobacteria</taxon>
        <taxon>Enterobacterales</taxon>
        <taxon>Enterobacteriaceae</taxon>
        <taxon>Escherichia</taxon>
    </lineage>
</organism>
<comment type="function">
    <text evidence="1">Required for the expression of anaerobic nitric oxide (NO) reductase, acts as a transcriptional activator for at least the norVW operon. Activation also requires sigma-54.</text>
</comment>
<comment type="pathway">
    <text evidence="1">Nitrogen metabolism; nitric oxide reduction.</text>
</comment>
<comment type="sequence caution" evidence="2">
    <conflict type="erroneous initiation">
        <sequence resource="EMBL-CDS" id="AAG57816"/>
    </conflict>
</comment>
<comment type="sequence caution" evidence="2">
    <conflict type="erroneous initiation">
        <sequence resource="EMBL-CDS" id="BAB36988"/>
    </conflict>
</comment>
<sequence length="504" mass="55186">MSFSVDVLANIAIELQRGIGHQDRFQRLITTLRQVLECDASALLRYDSRQFIPLAIDGLAKDVLGRRFALEGHPRLEAIARAGDVVRFPADSELPDPYDGLIPGQESLKVHACVGLPLFAGQNLIGALTLDGMQPDQFDVFSDEELRLIAALAAGALSNALLIEQLESQNMLPGDAAPFEAVKQTQMIGLSPGMTQLKKEIEIVAASDLNVLISGETGTGKELVAKAIHEASPRAVNPLVYLNCAALPESVAESELFGHVKGAFTGAISNRSGKFEMADNGTLFLDEIGELSLALQAKLLRVLQYGDIQRVGDDRSLRVDVRVLAATNRDLREEVLAGRFRADLFHRLSVFPLSVPPLRERGDDVILLAGYFCEQCRLRQGLSRVVLSAGARNLLQHYSFPGNVRELEHAIHRAVVLARATRSGDEVILEAQHFAFPEVTLPPPEVAAVPVVKQNLREATEAFQRETIRQALAQNHHNWAACARMLETDVANLHRLAKRLGLKD</sequence>